<reference key="1">
    <citation type="journal article" date="1988" name="J. Biol. Chem.">
        <title>Multiple genes provide the basis for antifreeze protein diversity and dosage in the ocean pout, Macrozoarces americanus.</title>
        <authorList>
            <person name="Hew C.-L."/>
            <person name="Wang N.-C."/>
            <person name="Joshi S."/>
            <person name="Fletcher G.L."/>
            <person name="Scott G.K."/>
            <person name="Hayes P.H."/>
            <person name="Buettner B."/>
            <person name="Davies P.L."/>
        </authorList>
    </citation>
    <scope>PROTEIN SEQUENCE</scope>
    <scope>SUBCELLULAR LOCATION</scope>
    <scope>TISSUE SPECIFICITY</scope>
</reference>
<sequence>SQSVVATQLIPMNTALTPAMMEGKVTNPIGIPFAEMSQIVGKQVNRIVAKGQTLMPNMVKTYAA</sequence>
<accession>P19612</accession>
<feature type="chain" id="PRO_0000155159" description="Ice-structuring protein SP3(HPLC 9)">
    <location>
        <begin position="1"/>
        <end position="64"/>
    </location>
</feature>
<feature type="domain" description="AFP-like" evidence="2">
    <location>
        <begin position="3"/>
        <end position="62"/>
    </location>
</feature>
<feature type="site" description="Important for ice-binding" evidence="1">
    <location>
        <position position="8"/>
    </location>
</feature>
<feature type="site" description="Important for ice-binding" evidence="1">
    <location>
        <position position="13"/>
    </location>
</feature>
<feature type="site" description="Important for ice-binding" evidence="1">
    <location>
        <position position="17"/>
    </location>
</feature>
<feature type="site" description="Important for ice-binding" evidence="1">
    <location>
        <position position="43"/>
    </location>
</feature>
<evidence type="ECO:0000250" key="1"/>
<evidence type="ECO:0000255" key="2">
    <source>
        <dbReference type="PROSITE-ProRule" id="PRU00021"/>
    </source>
</evidence>
<evidence type="ECO:0000269" key="3">
    <source>
    </source>
</evidence>
<evidence type="ECO:0000305" key="4"/>
<organism>
    <name type="scientific">Zoarces americanus</name>
    <name type="common">Ocean pout</name>
    <name type="synonym">Macrozoarces americanus</name>
    <dbReference type="NCBI Taxonomy" id="8199"/>
    <lineage>
        <taxon>Eukaryota</taxon>
        <taxon>Metazoa</taxon>
        <taxon>Chordata</taxon>
        <taxon>Craniata</taxon>
        <taxon>Vertebrata</taxon>
        <taxon>Euteleostomi</taxon>
        <taxon>Actinopterygii</taxon>
        <taxon>Neopterygii</taxon>
        <taxon>Teleostei</taxon>
        <taxon>Neoteleostei</taxon>
        <taxon>Acanthomorphata</taxon>
        <taxon>Eupercaria</taxon>
        <taxon>Perciformes</taxon>
        <taxon>Cottioidei</taxon>
        <taxon>Zoarcales</taxon>
        <taxon>Zoarcidae</taxon>
        <taxon>Zoarcinae</taxon>
        <taxon>Zoarces</taxon>
    </lineage>
</organism>
<protein>
    <recommendedName>
        <fullName>Ice-structuring protein SP3(HPLC 9)</fullName>
        <shortName>ISP SP3(HPLC 9)</shortName>
    </recommendedName>
    <alternativeName>
        <fullName>Antifreeze protein SP3(HPLC 9)</fullName>
    </alternativeName>
</protein>
<proteinExistence type="evidence at protein level"/>
<keyword id="KW-0047">Antifreeze protein</keyword>
<keyword id="KW-0903">Direct protein sequencing</keyword>
<keyword id="KW-0964">Secreted</keyword>
<name>ANP9_ZOAAM</name>
<comment type="function">
    <text evidence="1">Contributes to protect fish blood from freezing at subzero sea water temperatures. Lowers the blood freezing point. Binds to nascent ice crystals and prevents further growth (By similarity).</text>
</comment>
<comment type="subcellular location">
    <subcellularLocation>
        <location evidence="3">Secreted</location>
    </subcellularLocation>
</comment>
<comment type="tissue specificity">
    <text evidence="3">Detected in blood serum (at protein level).</text>
</comment>
<comment type="similarity">
    <text evidence="4">Belongs to the type-III AFP family.</text>
</comment>
<dbReference type="PIR" id="H31075">
    <property type="entry name" value="H31075"/>
</dbReference>
<dbReference type="SMR" id="P19612"/>
<dbReference type="GO" id="GO:0005576">
    <property type="term" value="C:extracellular region"/>
    <property type="evidence" value="ECO:0007669"/>
    <property type="project" value="UniProtKB-SubCell"/>
</dbReference>
<dbReference type="CDD" id="cd11617">
    <property type="entry name" value="Antifreeze_III"/>
    <property type="match status" value="1"/>
</dbReference>
<dbReference type="Gene3D" id="3.90.1210.10">
    <property type="entry name" value="Antifreeze-like/N-acetylneuraminic acid synthase C-terminal domain"/>
    <property type="match status" value="1"/>
</dbReference>
<dbReference type="InterPro" id="IPR006190">
    <property type="entry name" value="AFP_Neu5c_C"/>
</dbReference>
<dbReference type="InterPro" id="IPR036732">
    <property type="entry name" value="AFP_Neu5c_C_sf"/>
</dbReference>
<dbReference type="InterPro" id="IPR006013">
    <property type="entry name" value="Antifreeze_III"/>
</dbReference>
<dbReference type="InterPro" id="IPR013974">
    <property type="entry name" value="SAF"/>
</dbReference>
<dbReference type="Pfam" id="PF08666">
    <property type="entry name" value="SAF"/>
    <property type="match status" value="1"/>
</dbReference>
<dbReference type="PRINTS" id="PR00357">
    <property type="entry name" value="ANTIFREEZIII"/>
</dbReference>
<dbReference type="SMART" id="SM00858">
    <property type="entry name" value="SAF"/>
    <property type="match status" value="1"/>
</dbReference>
<dbReference type="SUPFAM" id="SSF51269">
    <property type="entry name" value="AFP III-like domain"/>
    <property type="match status" value="1"/>
</dbReference>
<dbReference type="PROSITE" id="PS50844">
    <property type="entry name" value="AFP_LIKE"/>
    <property type="match status" value="1"/>
</dbReference>